<sequence>MTNMIRQFLRQEAAGGLILIFAAVVALFMANSPLQGFYQSFLDVPVSVKIASLDISKPLLLWINDGLMAIFFLVVGLEVKRELMEGSLAGRDKAIFPAIAALGGMLAPALIYLLFNGADEVTRQGWAIPAATDIAFALGVMALLGNRVPTSLKVFLLALAIIDDLGVIIIIALFYTHEVSLQALGMAAAAIALLGYMNWRGVGKTSAYLLVGLVLWVCILKSGVHATLAGVIVGFMIPLHTQDKRSPSESLEHGLHPWVAYLILPLFAFANAGVSLQGVSISGLTSLLPLGIASGLFIGKPLGIFLFSWLAVKLGVAKLPDAINFKQIFAVSVLCGIGFTMSIFIASLAFDGADIALTTYSKLGILLGSTTAAVVGYSLLRLALPAKRNITH</sequence>
<proteinExistence type="inferred from homology"/>
<keyword id="KW-0050">Antiport</keyword>
<keyword id="KW-0997">Cell inner membrane</keyword>
<keyword id="KW-1003">Cell membrane</keyword>
<keyword id="KW-0406">Ion transport</keyword>
<keyword id="KW-0472">Membrane</keyword>
<keyword id="KW-0915">Sodium</keyword>
<keyword id="KW-0739">Sodium transport</keyword>
<keyword id="KW-0812">Transmembrane</keyword>
<keyword id="KW-1133">Transmembrane helix</keyword>
<keyword id="KW-0813">Transport</keyword>
<comment type="function">
    <text evidence="1">Na(+)/H(+) antiporter that extrudes sodium in exchange for external protons.</text>
</comment>
<comment type="catalytic activity">
    <reaction evidence="1">
        <text>Na(+)(in) + 2 H(+)(out) = Na(+)(out) + 2 H(+)(in)</text>
        <dbReference type="Rhea" id="RHEA:29251"/>
        <dbReference type="ChEBI" id="CHEBI:15378"/>
        <dbReference type="ChEBI" id="CHEBI:29101"/>
    </reaction>
    <physiologicalReaction direction="left-to-right" evidence="1">
        <dbReference type="Rhea" id="RHEA:29252"/>
    </physiologicalReaction>
</comment>
<comment type="subcellular location">
    <subcellularLocation>
        <location evidence="1">Cell inner membrane</location>
        <topology evidence="1">Multi-pass membrane protein</topology>
    </subcellularLocation>
</comment>
<comment type="similarity">
    <text evidence="1">Belongs to the NhaA Na(+)/H(+) (TC 2.A.33) antiporter family.</text>
</comment>
<gene>
    <name evidence="1" type="primary">nhaA</name>
    <name type="ordered locus">YE0611</name>
</gene>
<dbReference type="EMBL" id="AM286415">
    <property type="protein sequence ID" value="CAL10725.1"/>
    <property type="molecule type" value="Genomic_DNA"/>
</dbReference>
<dbReference type="RefSeq" id="WP_005166980.1">
    <property type="nucleotide sequence ID" value="NC_008800.1"/>
</dbReference>
<dbReference type="RefSeq" id="YP_001004965.1">
    <property type="nucleotide sequence ID" value="NC_008800.1"/>
</dbReference>
<dbReference type="SMR" id="A1JJD7"/>
<dbReference type="KEGG" id="yen:YE0611"/>
<dbReference type="PATRIC" id="fig|393305.7.peg.706"/>
<dbReference type="eggNOG" id="COG3004">
    <property type="taxonomic scope" value="Bacteria"/>
</dbReference>
<dbReference type="HOGENOM" id="CLU_015803_1_0_6"/>
<dbReference type="OrthoDB" id="9808135at2"/>
<dbReference type="Proteomes" id="UP000000642">
    <property type="component" value="Chromosome"/>
</dbReference>
<dbReference type="GO" id="GO:0005886">
    <property type="term" value="C:plasma membrane"/>
    <property type="evidence" value="ECO:0007669"/>
    <property type="project" value="UniProtKB-SubCell"/>
</dbReference>
<dbReference type="GO" id="GO:0015385">
    <property type="term" value="F:sodium:proton antiporter activity"/>
    <property type="evidence" value="ECO:0007669"/>
    <property type="project" value="TreeGrafter"/>
</dbReference>
<dbReference type="GO" id="GO:0006885">
    <property type="term" value="P:regulation of pH"/>
    <property type="evidence" value="ECO:0007669"/>
    <property type="project" value="InterPro"/>
</dbReference>
<dbReference type="Gene3D" id="1.20.1530.10">
    <property type="entry name" value="Na+/H+ antiporter like domain"/>
    <property type="match status" value="1"/>
</dbReference>
<dbReference type="HAMAP" id="MF_01844">
    <property type="entry name" value="NhaA"/>
    <property type="match status" value="1"/>
</dbReference>
<dbReference type="InterPro" id="IPR023171">
    <property type="entry name" value="Na/H_antiporter_dom_sf"/>
</dbReference>
<dbReference type="InterPro" id="IPR004670">
    <property type="entry name" value="NhaA"/>
</dbReference>
<dbReference type="NCBIfam" id="TIGR00773">
    <property type="entry name" value="NhaA"/>
    <property type="match status" value="1"/>
</dbReference>
<dbReference type="NCBIfam" id="NF007111">
    <property type="entry name" value="PRK09560.1"/>
    <property type="match status" value="1"/>
</dbReference>
<dbReference type="NCBIfam" id="NF007112">
    <property type="entry name" value="PRK09561.1"/>
    <property type="match status" value="1"/>
</dbReference>
<dbReference type="PANTHER" id="PTHR30341:SF0">
    <property type="entry name" value="NA(+)_H(+) ANTIPORTER NHAA"/>
    <property type="match status" value="1"/>
</dbReference>
<dbReference type="PANTHER" id="PTHR30341">
    <property type="entry name" value="SODIUM ION/PROTON ANTIPORTER NHAA-RELATED"/>
    <property type="match status" value="1"/>
</dbReference>
<dbReference type="Pfam" id="PF06965">
    <property type="entry name" value="Na_H_antiport_1"/>
    <property type="match status" value="1"/>
</dbReference>
<name>NHAA_YERE8</name>
<accession>A1JJD7</accession>
<feature type="chain" id="PRO_0000334466" description="Na(+)/H(+) antiporter NhaA">
    <location>
        <begin position="1"/>
        <end position="392"/>
    </location>
</feature>
<feature type="transmembrane region" description="Helical" evidence="1">
    <location>
        <begin position="14"/>
        <end position="34"/>
    </location>
</feature>
<feature type="transmembrane region" description="Helical" evidence="1">
    <location>
        <begin position="59"/>
        <end position="79"/>
    </location>
</feature>
<feature type="transmembrane region" description="Helical" evidence="1">
    <location>
        <begin position="95"/>
        <end position="115"/>
    </location>
</feature>
<feature type="transmembrane region" description="Helical" evidence="1">
    <location>
        <begin position="125"/>
        <end position="145"/>
    </location>
</feature>
<feature type="transmembrane region" description="Helical" evidence="1">
    <location>
        <begin position="154"/>
        <end position="174"/>
    </location>
</feature>
<feature type="transmembrane region" description="Helical" evidence="1">
    <location>
        <begin position="179"/>
        <end position="199"/>
    </location>
</feature>
<feature type="transmembrane region" description="Helical" evidence="1">
    <location>
        <begin position="213"/>
        <end position="233"/>
    </location>
</feature>
<feature type="transmembrane region" description="Helical" evidence="1">
    <location>
        <begin position="254"/>
        <end position="274"/>
    </location>
</feature>
<feature type="transmembrane region" description="Helical" evidence="1">
    <location>
        <begin position="287"/>
        <end position="307"/>
    </location>
</feature>
<feature type="transmembrane region" description="Helical" evidence="1">
    <location>
        <begin position="328"/>
        <end position="348"/>
    </location>
</feature>
<feature type="transmembrane region" description="Helical" evidence="1">
    <location>
        <begin position="363"/>
        <end position="383"/>
    </location>
</feature>
<evidence type="ECO:0000255" key="1">
    <source>
        <dbReference type="HAMAP-Rule" id="MF_01844"/>
    </source>
</evidence>
<protein>
    <recommendedName>
        <fullName evidence="1">Na(+)/H(+) antiporter NhaA</fullName>
    </recommendedName>
    <alternativeName>
        <fullName evidence="1">Sodium/proton antiporter NhaA</fullName>
    </alternativeName>
</protein>
<reference key="1">
    <citation type="journal article" date="2006" name="PLoS Genet.">
        <title>The complete genome sequence and comparative genome analysis of the high pathogenicity Yersinia enterocolitica strain 8081.</title>
        <authorList>
            <person name="Thomson N.R."/>
            <person name="Howard S."/>
            <person name="Wren B.W."/>
            <person name="Holden M.T.G."/>
            <person name="Crossman L."/>
            <person name="Challis G.L."/>
            <person name="Churcher C."/>
            <person name="Mungall K."/>
            <person name="Brooks K."/>
            <person name="Chillingworth T."/>
            <person name="Feltwell T."/>
            <person name="Abdellah Z."/>
            <person name="Hauser H."/>
            <person name="Jagels K."/>
            <person name="Maddison M."/>
            <person name="Moule S."/>
            <person name="Sanders M."/>
            <person name="Whitehead S."/>
            <person name="Quail M.A."/>
            <person name="Dougan G."/>
            <person name="Parkhill J."/>
            <person name="Prentice M.B."/>
        </authorList>
    </citation>
    <scope>NUCLEOTIDE SEQUENCE [LARGE SCALE GENOMIC DNA]</scope>
    <source>
        <strain>NCTC 13174 / 8081</strain>
    </source>
</reference>
<organism>
    <name type="scientific">Yersinia enterocolitica serotype O:8 / biotype 1B (strain NCTC 13174 / 8081)</name>
    <dbReference type="NCBI Taxonomy" id="393305"/>
    <lineage>
        <taxon>Bacteria</taxon>
        <taxon>Pseudomonadati</taxon>
        <taxon>Pseudomonadota</taxon>
        <taxon>Gammaproteobacteria</taxon>
        <taxon>Enterobacterales</taxon>
        <taxon>Yersiniaceae</taxon>
        <taxon>Yersinia</taxon>
    </lineage>
</organism>